<protein>
    <recommendedName>
        <fullName>Low specificity L-threonine aldolase</fullName>
        <shortName>Low-specificity L-TA</shortName>
        <ecNumber>4.1.2.48</ecNumber>
    </recommendedName>
</protein>
<dbReference type="EC" id="4.1.2.48"/>
<dbReference type="EMBL" id="AE005174">
    <property type="protein sequence ID" value="AAG55252.1"/>
    <property type="molecule type" value="Genomic_DNA"/>
</dbReference>
<dbReference type="EMBL" id="BA000007">
    <property type="protein sequence ID" value="BAB34379.1"/>
    <property type="molecule type" value="Genomic_DNA"/>
</dbReference>
<dbReference type="PIR" id="D90748">
    <property type="entry name" value="D90748"/>
</dbReference>
<dbReference type="PIR" id="H85598">
    <property type="entry name" value="H85598"/>
</dbReference>
<dbReference type="RefSeq" id="NP_308983.1">
    <property type="nucleotide sequence ID" value="NC_002695.1"/>
</dbReference>
<dbReference type="RefSeq" id="WP_000566359.1">
    <property type="nucleotide sequence ID" value="NZ_VOAI01000006.1"/>
</dbReference>
<dbReference type="SMR" id="P58319"/>
<dbReference type="STRING" id="155864.Z1104"/>
<dbReference type="GeneID" id="917698"/>
<dbReference type="KEGG" id="ece:Z1104"/>
<dbReference type="KEGG" id="ecs:ECs_0956"/>
<dbReference type="PATRIC" id="fig|386585.9.peg.1072"/>
<dbReference type="eggNOG" id="COG2008">
    <property type="taxonomic scope" value="Bacteria"/>
</dbReference>
<dbReference type="HOGENOM" id="CLU_029381_0_3_6"/>
<dbReference type="OMA" id="VQTNIVI"/>
<dbReference type="Proteomes" id="UP000000558">
    <property type="component" value="Chromosome"/>
</dbReference>
<dbReference type="Proteomes" id="UP000002519">
    <property type="component" value="Chromosome"/>
</dbReference>
<dbReference type="GO" id="GO:0005829">
    <property type="term" value="C:cytosol"/>
    <property type="evidence" value="ECO:0007669"/>
    <property type="project" value="TreeGrafter"/>
</dbReference>
<dbReference type="GO" id="GO:0008732">
    <property type="term" value="F:L-allo-threonine aldolase activity"/>
    <property type="evidence" value="ECO:0007669"/>
    <property type="project" value="TreeGrafter"/>
</dbReference>
<dbReference type="GO" id="GO:0006545">
    <property type="term" value="P:glycine biosynthetic process"/>
    <property type="evidence" value="ECO:0007669"/>
    <property type="project" value="TreeGrafter"/>
</dbReference>
<dbReference type="GO" id="GO:0006567">
    <property type="term" value="P:threonine catabolic process"/>
    <property type="evidence" value="ECO:0007669"/>
    <property type="project" value="TreeGrafter"/>
</dbReference>
<dbReference type="CDD" id="cd06502">
    <property type="entry name" value="TA_like"/>
    <property type="match status" value="1"/>
</dbReference>
<dbReference type="FunFam" id="3.40.640.10:FF:000030">
    <property type="entry name" value="Low-specificity L-threonine aldolase"/>
    <property type="match status" value="1"/>
</dbReference>
<dbReference type="FunFam" id="3.90.1150.10:FF:000044">
    <property type="entry name" value="Low-specificity L-threonine aldolase"/>
    <property type="match status" value="1"/>
</dbReference>
<dbReference type="Gene3D" id="3.90.1150.10">
    <property type="entry name" value="Aspartate Aminotransferase, domain 1"/>
    <property type="match status" value="1"/>
</dbReference>
<dbReference type="Gene3D" id="3.40.640.10">
    <property type="entry name" value="Type I PLP-dependent aspartate aminotransferase-like (Major domain)"/>
    <property type="match status" value="1"/>
</dbReference>
<dbReference type="InterPro" id="IPR001597">
    <property type="entry name" value="ArAA_b-elim_lyase/Thr_aldolase"/>
</dbReference>
<dbReference type="InterPro" id="IPR023603">
    <property type="entry name" value="Low_specificity_L-TA-like"/>
</dbReference>
<dbReference type="InterPro" id="IPR015424">
    <property type="entry name" value="PyrdxlP-dep_Trfase"/>
</dbReference>
<dbReference type="InterPro" id="IPR015421">
    <property type="entry name" value="PyrdxlP-dep_Trfase_major"/>
</dbReference>
<dbReference type="InterPro" id="IPR015422">
    <property type="entry name" value="PyrdxlP-dep_Trfase_small"/>
</dbReference>
<dbReference type="NCBIfam" id="NF041359">
    <property type="entry name" value="GntG_guanitoxin"/>
    <property type="match status" value="1"/>
</dbReference>
<dbReference type="NCBIfam" id="NF007825">
    <property type="entry name" value="PRK10534.1"/>
    <property type="match status" value="1"/>
</dbReference>
<dbReference type="PANTHER" id="PTHR48097:SF9">
    <property type="entry name" value="L-THREONINE ALDOLASE"/>
    <property type="match status" value="1"/>
</dbReference>
<dbReference type="PANTHER" id="PTHR48097">
    <property type="entry name" value="L-THREONINE ALDOLASE-RELATED"/>
    <property type="match status" value="1"/>
</dbReference>
<dbReference type="Pfam" id="PF01212">
    <property type="entry name" value="Beta_elim_lyase"/>
    <property type="match status" value="1"/>
</dbReference>
<dbReference type="PIRSF" id="PIRSF017617">
    <property type="entry name" value="Thr_aldolase"/>
    <property type="match status" value="1"/>
</dbReference>
<dbReference type="SUPFAM" id="SSF53383">
    <property type="entry name" value="PLP-dependent transferases"/>
    <property type="match status" value="1"/>
</dbReference>
<keyword id="KW-0456">Lyase</keyword>
<keyword id="KW-0663">Pyridoxal phosphate</keyword>
<keyword id="KW-1185">Reference proteome</keyword>
<sequence length="333" mass="36483">MIDLRSDTVTRPSRAMLEAMMAAPVGDDVYGDDPTVNALQDYAAELSGKEAAIFLPTGTQANLVALLSHCERGEEYIVGQAAHNYLFEAGGAAVLGSIQPQPIDAAADGTLPLDKVAMKIKPDDIHFARTKLLSLENTHNGKVLPREYLKDAWEFTRERNLALHVDGARIFNAVVAYGSELKELTQYCDSFTICLSKGLGTPVGSLLVGNRDYIKRAIRWRKMTGGGMRQSGILAAAGMYALKNNVARLQEDHDNAAWMAEQLREAGADVMRQDTNMLFVRVGEENAAALGEYMKARNVLINASPIVRLVTHLDVSREQLAEVAAHWRAFLAR</sequence>
<accession>P58319</accession>
<comment type="function">
    <text evidence="1">Catalyzes the cleavage of L-allo-threonine and L-threonine to glycine and acetaldehyde. L-threo-phenylserine and L-erythro-phenylserine are also good substrates (By similarity).</text>
</comment>
<comment type="catalytic activity">
    <reaction>
        <text>L-threonine = acetaldehyde + glycine</text>
        <dbReference type="Rhea" id="RHEA:19625"/>
        <dbReference type="ChEBI" id="CHEBI:15343"/>
        <dbReference type="ChEBI" id="CHEBI:57305"/>
        <dbReference type="ChEBI" id="CHEBI:57926"/>
        <dbReference type="EC" id="4.1.2.48"/>
    </reaction>
</comment>
<comment type="catalytic activity">
    <reaction>
        <text>L-allo-threonine = acetaldehyde + glycine</text>
        <dbReference type="Rhea" id="RHEA:26209"/>
        <dbReference type="ChEBI" id="CHEBI:15343"/>
        <dbReference type="ChEBI" id="CHEBI:57305"/>
        <dbReference type="ChEBI" id="CHEBI:58585"/>
        <dbReference type="EC" id="4.1.2.48"/>
    </reaction>
</comment>
<comment type="cofactor">
    <cofactor evidence="1">
        <name>pyridoxal 5'-phosphate</name>
        <dbReference type="ChEBI" id="CHEBI:597326"/>
    </cofactor>
</comment>
<comment type="subunit">
    <text evidence="1">Homotetramer.</text>
</comment>
<comment type="similarity">
    <text evidence="2">Belongs to the threonine aldolase family.</text>
</comment>
<feature type="chain" id="PRO_0000121576" description="Low specificity L-threonine aldolase">
    <location>
        <begin position="1"/>
        <end position="333"/>
    </location>
</feature>
<feature type="modified residue" description="N6-(pyridoxal phosphate)lysine" evidence="1">
    <location>
        <position position="197"/>
    </location>
</feature>
<proteinExistence type="inferred from homology"/>
<name>LTAE_ECO57</name>
<evidence type="ECO:0000250" key="1"/>
<evidence type="ECO:0000305" key="2"/>
<organism>
    <name type="scientific">Escherichia coli O157:H7</name>
    <dbReference type="NCBI Taxonomy" id="83334"/>
    <lineage>
        <taxon>Bacteria</taxon>
        <taxon>Pseudomonadati</taxon>
        <taxon>Pseudomonadota</taxon>
        <taxon>Gammaproteobacteria</taxon>
        <taxon>Enterobacterales</taxon>
        <taxon>Enterobacteriaceae</taxon>
        <taxon>Escherichia</taxon>
    </lineage>
</organism>
<reference key="1">
    <citation type="journal article" date="2001" name="Nature">
        <title>Genome sequence of enterohaemorrhagic Escherichia coli O157:H7.</title>
        <authorList>
            <person name="Perna N.T."/>
            <person name="Plunkett G. III"/>
            <person name="Burland V."/>
            <person name="Mau B."/>
            <person name="Glasner J.D."/>
            <person name="Rose D.J."/>
            <person name="Mayhew G.F."/>
            <person name="Evans P.S."/>
            <person name="Gregor J."/>
            <person name="Kirkpatrick H.A."/>
            <person name="Posfai G."/>
            <person name="Hackett J."/>
            <person name="Klink S."/>
            <person name="Boutin A."/>
            <person name="Shao Y."/>
            <person name="Miller L."/>
            <person name="Grotbeck E.J."/>
            <person name="Davis N.W."/>
            <person name="Lim A."/>
            <person name="Dimalanta E.T."/>
            <person name="Potamousis K."/>
            <person name="Apodaca J."/>
            <person name="Anantharaman T.S."/>
            <person name="Lin J."/>
            <person name="Yen G."/>
            <person name="Schwartz D.C."/>
            <person name="Welch R.A."/>
            <person name="Blattner F.R."/>
        </authorList>
    </citation>
    <scope>NUCLEOTIDE SEQUENCE [LARGE SCALE GENOMIC DNA]</scope>
    <source>
        <strain>O157:H7 / EDL933 / ATCC 700927 / EHEC</strain>
    </source>
</reference>
<reference key="2">
    <citation type="journal article" date="2001" name="DNA Res.">
        <title>Complete genome sequence of enterohemorrhagic Escherichia coli O157:H7 and genomic comparison with a laboratory strain K-12.</title>
        <authorList>
            <person name="Hayashi T."/>
            <person name="Makino K."/>
            <person name="Ohnishi M."/>
            <person name="Kurokawa K."/>
            <person name="Ishii K."/>
            <person name="Yokoyama K."/>
            <person name="Han C.-G."/>
            <person name="Ohtsubo E."/>
            <person name="Nakayama K."/>
            <person name="Murata T."/>
            <person name="Tanaka M."/>
            <person name="Tobe T."/>
            <person name="Iida T."/>
            <person name="Takami H."/>
            <person name="Honda T."/>
            <person name="Sasakawa C."/>
            <person name="Ogasawara N."/>
            <person name="Yasunaga T."/>
            <person name="Kuhara S."/>
            <person name="Shiba T."/>
            <person name="Hattori M."/>
            <person name="Shinagawa H."/>
        </authorList>
    </citation>
    <scope>NUCLEOTIDE SEQUENCE [LARGE SCALE GENOMIC DNA]</scope>
    <source>
        <strain>O157:H7 / Sakai / RIMD 0509952 / EHEC</strain>
    </source>
</reference>
<gene>
    <name type="primary">ltaE</name>
    <name type="ordered locus">Z1104</name>
    <name type="ordered locus">ECs0956</name>
</gene>